<organism>
    <name type="scientific">Saccharomyces cerevisiae (strain ATCC 204508 / S288c)</name>
    <name type="common">Baker's yeast</name>
    <dbReference type="NCBI Taxonomy" id="559292"/>
    <lineage>
        <taxon>Eukaryota</taxon>
        <taxon>Fungi</taxon>
        <taxon>Dikarya</taxon>
        <taxon>Ascomycota</taxon>
        <taxon>Saccharomycotina</taxon>
        <taxon>Saccharomycetes</taxon>
        <taxon>Saccharomycetales</taxon>
        <taxon>Saccharomycetaceae</taxon>
        <taxon>Saccharomyces</taxon>
    </lineage>
</organism>
<protein>
    <recommendedName>
        <fullName evidence="9">Fructose-2,6-bisphosphatase</fullName>
        <shortName evidence="8">FBPase 2</shortName>
        <ecNumber evidence="10 11 12">3.1.3.46</ecNumber>
    </recommendedName>
</protein>
<comment type="function">
    <text evidence="5 11 12">Monofunctional, high-specificity fructose-2,6-bisphosphatase, which releases phosphate from the 2-position of fructose 2,6-bisphosphate. Has no detectable 6-phosphofructo-2-kinase activity.</text>
</comment>
<comment type="catalytic activity">
    <reaction evidence="10 11 12">
        <text>beta-D-fructose 2,6-bisphosphate + H2O = beta-D-fructose 6-phosphate + phosphate</text>
        <dbReference type="Rhea" id="RHEA:17289"/>
        <dbReference type="ChEBI" id="CHEBI:15377"/>
        <dbReference type="ChEBI" id="CHEBI:43474"/>
        <dbReference type="ChEBI" id="CHEBI:57634"/>
        <dbReference type="ChEBI" id="CHEBI:58579"/>
        <dbReference type="EC" id="3.1.3.46"/>
    </reaction>
    <physiologicalReaction direction="left-to-right" evidence="10 11 12">
        <dbReference type="Rhea" id="RHEA:17290"/>
    </physiologicalReaction>
</comment>
<comment type="activity regulation">
    <text evidence="11 12">Inhibited by fructose 6-P, activated by glycerol 3-P.</text>
</comment>
<comment type="biophysicochemical properties">
    <kinetics>
        <KM evidence="11">0.3 uM for fructose 2,6-bisphosphate</KM>
        <KM evidence="12">0.1 uM for fructose 2,6-bisphosphate</KM>
    </kinetics>
</comment>
<comment type="interaction">
    <interactant intactId="EBI-6749">
        <id>P32604</id>
    </interactant>
    <interactant intactId="EBI-33827">
        <id>Q06137</id>
        <label>YLR345W</label>
    </interactant>
    <organismsDiffer>false</organismsDiffer>
    <experiments>4</experiments>
</comment>
<comment type="miscellaneous">
    <text evidence="6">Present with 1680 molecules/cell in log phase SD medium.</text>
</comment>
<comment type="similarity">
    <text evidence="9">In the C-terminal section; belongs to the phosphoglycerate mutase family.</text>
</comment>
<gene>
    <name evidence="7" type="primary">FBP26</name>
    <name type="ordered locus">YJL155C</name>
    <name type="ORF">J0575</name>
</gene>
<dbReference type="EC" id="3.1.3.46" evidence="10 11 12"/>
<dbReference type="EMBL" id="S42124">
    <property type="protein sequence ID" value="AAB22823.1"/>
    <property type="molecule type" value="Genomic_DNA"/>
</dbReference>
<dbReference type="EMBL" id="Z49430">
    <property type="protein sequence ID" value="CAA89450.1"/>
    <property type="molecule type" value="Genomic_DNA"/>
</dbReference>
<dbReference type="EMBL" id="BK006943">
    <property type="protein sequence ID" value="DAA08648.1"/>
    <property type="molecule type" value="Genomic_DNA"/>
</dbReference>
<dbReference type="PIR" id="S56938">
    <property type="entry name" value="S56938"/>
</dbReference>
<dbReference type="RefSeq" id="NP_012380.1">
    <property type="nucleotide sequence ID" value="NM_001181588.1"/>
</dbReference>
<dbReference type="SMR" id="P32604"/>
<dbReference type="BioGRID" id="33605">
    <property type="interactions" value="86"/>
</dbReference>
<dbReference type="DIP" id="DIP-2593N"/>
<dbReference type="FunCoup" id="P32604">
    <property type="interactions" value="623"/>
</dbReference>
<dbReference type="IntAct" id="P32604">
    <property type="interactions" value="6"/>
</dbReference>
<dbReference type="MINT" id="P32604"/>
<dbReference type="STRING" id="4932.YJL155C"/>
<dbReference type="iPTMnet" id="P32604"/>
<dbReference type="PaxDb" id="4932-YJL155C"/>
<dbReference type="PeptideAtlas" id="P32604"/>
<dbReference type="EnsemblFungi" id="YJL155C_mRNA">
    <property type="protein sequence ID" value="YJL155C"/>
    <property type="gene ID" value="YJL155C"/>
</dbReference>
<dbReference type="GeneID" id="853286"/>
<dbReference type="KEGG" id="sce:YJL155C"/>
<dbReference type="AGR" id="SGD:S000003691"/>
<dbReference type="SGD" id="S000003691">
    <property type="gene designation" value="FBP26"/>
</dbReference>
<dbReference type="VEuPathDB" id="FungiDB:YJL155C"/>
<dbReference type="eggNOG" id="KOG0234">
    <property type="taxonomic scope" value="Eukaryota"/>
</dbReference>
<dbReference type="GeneTree" id="ENSGT00950000182835"/>
<dbReference type="HOGENOM" id="CLU_006383_1_0_1"/>
<dbReference type="InParanoid" id="P32604"/>
<dbReference type="OMA" id="RWIQERC"/>
<dbReference type="OrthoDB" id="267323at2759"/>
<dbReference type="BioCyc" id="YEAST:YJL155C-MONOMER"/>
<dbReference type="Reactome" id="R-SCE-9634600">
    <property type="pathway name" value="Regulation of glycolysis by fructose 2,6-bisphosphate metabolism"/>
</dbReference>
<dbReference type="BioGRID-ORCS" id="853286">
    <property type="hits" value="0 hits in 10 CRISPR screens"/>
</dbReference>
<dbReference type="PRO" id="PR:P32604"/>
<dbReference type="Proteomes" id="UP000002311">
    <property type="component" value="Chromosome X"/>
</dbReference>
<dbReference type="RNAct" id="P32604">
    <property type="molecule type" value="protein"/>
</dbReference>
<dbReference type="GO" id="GO:0005737">
    <property type="term" value="C:cytoplasm"/>
    <property type="evidence" value="ECO:0007005"/>
    <property type="project" value="SGD"/>
</dbReference>
<dbReference type="GO" id="GO:0005829">
    <property type="term" value="C:cytosol"/>
    <property type="evidence" value="ECO:0000318"/>
    <property type="project" value="GO_Central"/>
</dbReference>
<dbReference type="GO" id="GO:0003873">
    <property type="term" value="F:6-phosphofructo-2-kinase activity"/>
    <property type="evidence" value="ECO:0000318"/>
    <property type="project" value="GO_Central"/>
</dbReference>
<dbReference type="GO" id="GO:0005524">
    <property type="term" value="F:ATP binding"/>
    <property type="evidence" value="ECO:0007669"/>
    <property type="project" value="UniProtKB-KW"/>
</dbReference>
<dbReference type="GO" id="GO:0004331">
    <property type="term" value="F:fructose-2,6-bisphosphate 2-phosphatase activity"/>
    <property type="evidence" value="ECO:0000315"/>
    <property type="project" value="SGD"/>
</dbReference>
<dbReference type="GO" id="GO:0006003">
    <property type="term" value="P:fructose 2,6-bisphosphate metabolic process"/>
    <property type="evidence" value="ECO:0000318"/>
    <property type="project" value="GO_Central"/>
</dbReference>
<dbReference type="GO" id="GO:0006000">
    <property type="term" value="P:fructose metabolic process"/>
    <property type="evidence" value="ECO:0007669"/>
    <property type="project" value="InterPro"/>
</dbReference>
<dbReference type="GO" id="GO:0006006">
    <property type="term" value="P:glucose metabolic process"/>
    <property type="evidence" value="ECO:0000315"/>
    <property type="project" value="SGD"/>
</dbReference>
<dbReference type="CDD" id="cd07067">
    <property type="entry name" value="HP_PGM_like"/>
    <property type="match status" value="1"/>
</dbReference>
<dbReference type="FunFam" id="3.40.50.1240:FF:000005">
    <property type="entry name" value="GpmB, Fructose-2,6-bisphosphatase"/>
    <property type="match status" value="1"/>
</dbReference>
<dbReference type="FunFam" id="3.40.50.300:FF:000644">
    <property type="entry name" value="GpmB, Fructose-2,6-bisphosphatase"/>
    <property type="match status" value="1"/>
</dbReference>
<dbReference type="Gene3D" id="3.40.50.300">
    <property type="entry name" value="P-loop containing nucleotide triphosphate hydrolases"/>
    <property type="match status" value="1"/>
</dbReference>
<dbReference type="Gene3D" id="3.40.50.1240">
    <property type="entry name" value="Phosphoglycerate mutase-like"/>
    <property type="match status" value="1"/>
</dbReference>
<dbReference type="InterPro" id="IPR003094">
    <property type="entry name" value="6Pfruct_kin"/>
</dbReference>
<dbReference type="InterPro" id="IPR013079">
    <property type="entry name" value="6Phosfructo_kin"/>
</dbReference>
<dbReference type="InterPro" id="IPR013078">
    <property type="entry name" value="His_Pase_superF_clade-1"/>
</dbReference>
<dbReference type="InterPro" id="IPR029033">
    <property type="entry name" value="His_PPase_superfam"/>
</dbReference>
<dbReference type="InterPro" id="IPR027417">
    <property type="entry name" value="P-loop_NTPase"/>
</dbReference>
<dbReference type="InterPro" id="IPR001345">
    <property type="entry name" value="PG/BPGM_mutase_AS"/>
</dbReference>
<dbReference type="PANTHER" id="PTHR10606:SF44">
    <property type="entry name" value="6-PHOSPHOFRUCTO 2-KINASE_FRUCTOSE 2,6-BISPHOSPHATASE LONG FORM"/>
    <property type="match status" value="1"/>
</dbReference>
<dbReference type="PANTHER" id="PTHR10606">
    <property type="entry name" value="6-PHOSPHOFRUCTO-2-KINASE/FRUCTOSE-2,6-BISPHOSPHATASE"/>
    <property type="match status" value="1"/>
</dbReference>
<dbReference type="Pfam" id="PF01591">
    <property type="entry name" value="6PF2K"/>
    <property type="match status" value="1"/>
</dbReference>
<dbReference type="Pfam" id="PF00300">
    <property type="entry name" value="His_Phos_1"/>
    <property type="match status" value="1"/>
</dbReference>
<dbReference type="PIRSF" id="PIRSF000709">
    <property type="entry name" value="6PFK_2-Ptase"/>
    <property type="match status" value="1"/>
</dbReference>
<dbReference type="PRINTS" id="PR00991">
    <property type="entry name" value="6PFRUCTKNASE"/>
</dbReference>
<dbReference type="SMART" id="SM00855">
    <property type="entry name" value="PGAM"/>
    <property type="match status" value="1"/>
</dbReference>
<dbReference type="SUPFAM" id="SSF52540">
    <property type="entry name" value="P-loop containing nucleoside triphosphate hydrolases"/>
    <property type="match status" value="1"/>
</dbReference>
<dbReference type="SUPFAM" id="SSF53254">
    <property type="entry name" value="Phosphoglycerate mutase-like"/>
    <property type="match status" value="1"/>
</dbReference>
<dbReference type="PROSITE" id="PS00175">
    <property type="entry name" value="PG_MUTASE"/>
    <property type="match status" value="1"/>
</dbReference>
<reference key="1">
    <citation type="journal article" date="1992" name="Biochemistry">
        <title>The yeast FBP26 gene codes for a fructose-2,6-bisphosphatase.</title>
        <authorList>
            <person name="Paravicini G."/>
            <person name="Kretschmer M."/>
        </authorList>
    </citation>
    <scope>NUCLEOTIDE SEQUENCE [GENOMIC DNA]</scope>
    <scope>FUNCTION</scope>
    <scope>CATALYTIC ACTIVITY</scope>
</reference>
<reference key="2">
    <citation type="journal article" date="1996" name="EMBO J.">
        <title>Complete nucleotide sequence of Saccharomyces cerevisiae chromosome X.</title>
        <authorList>
            <person name="Galibert F."/>
            <person name="Alexandraki D."/>
            <person name="Baur A."/>
            <person name="Boles E."/>
            <person name="Chalwatzis N."/>
            <person name="Chuat J.-C."/>
            <person name="Coster F."/>
            <person name="Cziepluch C."/>
            <person name="de Haan M."/>
            <person name="Domdey H."/>
            <person name="Durand P."/>
            <person name="Entian K.-D."/>
            <person name="Gatius M."/>
            <person name="Goffeau A."/>
            <person name="Grivell L.A."/>
            <person name="Hennemann A."/>
            <person name="Herbert C.J."/>
            <person name="Heumann K."/>
            <person name="Hilger F."/>
            <person name="Hollenberg C.P."/>
            <person name="Huang M.-E."/>
            <person name="Jacq C."/>
            <person name="Jauniaux J.-C."/>
            <person name="Katsoulou C."/>
            <person name="Kirchrath L."/>
            <person name="Kleine K."/>
            <person name="Kordes E."/>
            <person name="Koetter P."/>
            <person name="Liebl S."/>
            <person name="Louis E.J."/>
            <person name="Manus V."/>
            <person name="Mewes H.-W."/>
            <person name="Miosga T."/>
            <person name="Obermaier B."/>
            <person name="Perea J."/>
            <person name="Pohl T.M."/>
            <person name="Portetelle D."/>
            <person name="Pujol A."/>
            <person name="Purnelle B."/>
            <person name="Ramezani Rad M."/>
            <person name="Rasmussen S.W."/>
            <person name="Rose M."/>
            <person name="Rossau R."/>
            <person name="Schaaff-Gerstenschlaeger I."/>
            <person name="Smits P.H.M."/>
            <person name="Scarcez T."/>
            <person name="Soriano N."/>
            <person name="To Van D."/>
            <person name="Tzermia M."/>
            <person name="Van Broekhoven A."/>
            <person name="Vandenbol M."/>
            <person name="Wedler H."/>
            <person name="von Wettstein D."/>
            <person name="Wambutt R."/>
            <person name="Zagulski M."/>
            <person name="Zollner A."/>
            <person name="Karpfinger-Hartl L."/>
        </authorList>
    </citation>
    <scope>NUCLEOTIDE SEQUENCE [LARGE SCALE GENOMIC DNA]</scope>
    <source>
        <strain>ATCC 204508 / S288c</strain>
    </source>
</reference>
<reference key="3">
    <citation type="journal article" date="2014" name="G3 (Bethesda)">
        <title>The reference genome sequence of Saccharomyces cerevisiae: Then and now.</title>
        <authorList>
            <person name="Engel S.R."/>
            <person name="Dietrich F.S."/>
            <person name="Fisk D.G."/>
            <person name="Binkley G."/>
            <person name="Balakrishnan R."/>
            <person name="Costanzo M.C."/>
            <person name="Dwight S.S."/>
            <person name="Hitz B.C."/>
            <person name="Karra K."/>
            <person name="Nash R.S."/>
            <person name="Weng S."/>
            <person name="Wong E.D."/>
            <person name="Lloyd P."/>
            <person name="Skrzypek M.S."/>
            <person name="Miyasato S.R."/>
            <person name="Simison M."/>
            <person name="Cherry J.M."/>
        </authorList>
    </citation>
    <scope>GENOME REANNOTATION</scope>
    <source>
        <strain>ATCC 204508 / S288c</strain>
    </source>
</reference>
<reference key="4">
    <citation type="journal article" date="1987" name="Biochem. J.">
        <title>Fructose-2,6-bisphosphatase and 6-phosphofructo-2-kinase are separable in yeast.</title>
        <authorList>
            <person name="Kretschmer M."/>
            <person name="Schellenberger W."/>
            <person name="Otto A."/>
            <person name="Kessler R."/>
            <person name="Hofmann E."/>
        </authorList>
    </citation>
    <scope>FUNCTION</scope>
    <scope>CATALYTIC ACTIVITY</scope>
    <scope>ACTIVITY REGULATION</scope>
</reference>
<reference key="5">
    <citation type="journal article" date="1988" name="Eur. J. Biochem.">
        <title>Characterization of phosphofructokinase 2 and of enzymes involved in the degradation of fructose 2,6-bisphosphate in yeast.</title>
        <authorList>
            <person name="Francois J."/>
            <person name="Van Schaftigen E."/>
            <person name="Hers H.G."/>
        </authorList>
    </citation>
    <scope>FUNCTION</scope>
    <scope>CATALYTIC ACTIVITY</scope>
    <scope>ACTIVITY REGULATION</scope>
</reference>
<reference key="6">
    <citation type="journal article" date="2003" name="Nature">
        <title>Global analysis of protein expression in yeast.</title>
        <authorList>
            <person name="Ghaemmaghami S."/>
            <person name="Huh W.-K."/>
            <person name="Bower K."/>
            <person name="Howson R.W."/>
            <person name="Belle A."/>
            <person name="Dephoure N."/>
            <person name="O'Shea E.K."/>
            <person name="Weissman J.S."/>
        </authorList>
    </citation>
    <scope>LEVEL OF PROTEIN EXPRESSION [LARGE SCALE ANALYSIS]</scope>
</reference>
<reference key="7">
    <citation type="journal article" date="2007" name="J. Proteome Res.">
        <title>Large-scale phosphorylation analysis of alpha-factor-arrested Saccharomyces cerevisiae.</title>
        <authorList>
            <person name="Li X."/>
            <person name="Gerber S.A."/>
            <person name="Rudner A.D."/>
            <person name="Beausoleil S.A."/>
            <person name="Haas W."/>
            <person name="Villen J."/>
            <person name="Elias J.E."/>
            <person name="Gygi S.P."/>
        </authorList>
    </citation>
    <scope>PHOSPHORYLATION [LARGE SCALE ANALYSIS] AT SER-446</scope>
    <scope>IDENTIFICATION BY MASS SPECTROMETRY [LARGE SCALE ANALYSIS]</scope>
    <source>
        <strain>ADR376</strain>
    </source>
</reference>
<reference key="8">
    <citation type="journal article" date="2008" name="Mol. Cell. Proteomics">
        <title>A multidimensional chromatography technology for in-depth phosphoproteome analysis.</title>
        <authorList>
            <person name="Albuquerque C.P."/>
            <person name="Smolka M.B."/>
            <person name="Payne S.H."/>
            <person name="Bafna V."/>
            <person name="Eng J."/>
            <person name="Zhou H."/>
        </authorList>
    </citation>
    <scope>PHOSPHORYLATION [LARGE SCALE ANALYSIS] AT SER-435 AND SER-446</scope>
    <scope>IDENTIFICATION BY MASS SPECTROMETRY [LARGE SCALE ANALYSIS]</scope>
</reference>
<reference key="9">
    <citation type="journal article" date="2009" name="Science">
        <title>Global analysis of Cdk1 substrate phosphorylation sites provides insights into evolution.</title>
        <authorList>
            <person name="Holt L.J."/>
            <person name="Tuch B.B."/>
            <person name="Villen J."/>
            <person name="Johnson A.D."/>
            <person name="Gygi S.P."/>
            <person name="Morgan D.O."/>
        </authorList>
    </citation>
    <scope>PHOSPHORYLATION [LARGE SCALE ANALYSIS] AT SER-446</scope>
    <scope>IDENTIFICATION BY MASS SPECTROMETRY [LARGE SCALE ANALYSIS]</scope>
</reference>
<sequence length="452" mass="52595">MGYSTISNDNDIKVCVIMVGLPARGKSFISQKIIRYLSWLSIKAKCFNVGNYRRDVSGNVPMDAEFFNFENTDNFKLRELAAQNAIKDIVNFFTKEDGSVAVFDATNSTRKRRKWLKDICEKNNIQPMFLESWSNDHELIINNAKDIGSTSPDYENSEPHVAEADFLERIRQYERFYEPLDPQKDKDMTFIKLVNIIEEVVINKIRTYLESRIVFYVMNIRPKPKYIWLSRHGESIYNVEKKIGGDSSLSERGFQYAKKLEQLVKESAGEINLTVWTSTLKRTQQTANYLPYKKLQWKALDELDAGVCDGMTYEEIEKEYPEDFKARDNDKYEYRYRGGESYRDVVIRLEPVIMELERQENVLIITHQAVLRCIYAYFMNVPQEESPWMSIPLHTLIKLEPRAYGTKVTKIKANIPAVSTYKEKGTSQVGELSQSSTKLHQLLNDSPLEDKF</sequence>
<proteinExistence type="evidence at protein level"/>
<feature type="chain" id="PRO_0000179975" description="Fructose-2,6-bisphosphatase">
    <location>
        <begin position="1"/>
        <end position="452"/>
    </location>
</feature>
<feature type="region of interest" description="6-phosphofructo-2-kinase" evidence="1">
    <location>
        <begin position="1"/>
        <end position="223"/>
    </location>
</feature>
<feature type="region of interest" description="Fructose-2,6-bisphosphatase">
    <location>
        <begin position="224"/>
        <end position="452"/>
    </location>
</feature>
<feature type="active site" evidence="4">
    <location>
        <position position="104"/>
    </location>
</feature>
<feature type="active site" description="Tele-phosphohistidine intermediate" evidence="3">
    <location>
        <position position="232"/>
    </location>
</feature>
<feature type="active site" description="Proton donor/acceptor" evidence="3">
    <location>
        <position position="302"/>
    </location>
</feature>
<feature type="binding site" evidence="3">
    <location>
        <begin position="20"/>
        <end position="28"/>
    </location>
    <ligand>
        <name>ATP</name>
        <dbReference type="ChEBI" id="CHEBI:30616"/>
    </ligand>
</feature>
<feature type="binding site" evidence="3">
    <location>
        <position position="53"/>
    </location>
    <ligand>
        <name>beta-D-fructose 6-phosphate</name>
        <dbReference type="ChEBI" id="CHEBI:57634"/>
    </ligand>
</feature>
<feature type="binding site" evidence="3">
    <location>
        <position position="78"/>
    </location>
    <ligand>
        <name>beta-D-fructose 6-phosphate</name>
        <dbReference type="ChEBI" id="CHEBI:57634"/>
    </ligand>
</feature>
<feature type="binding site" evidence="3">
    <location>
        <position position="106"/>
    </location>
    <ligand>
        <name>beta-D-fructose 6-phosphate</name>
        <dbReference type="ChEBI" id="CHEBI:57634"/>
    </ligand>
</feature>
<feature type="binding site" evidence="3">
    <location>
        <position position="112"/>
    </location>
    <ligand>
        <name>beta-D-fructose 6-phosphate</name>
        <dbReference type="ChEBI" id="CHEBI:57634"/>
    </ligand>
</feature>
<feature type="binding site" evidence="3">
    <location>
        <begin position="143"/>
        <end position="148"/>
    </location>
    <ligand>
        <name>ATP</name>
        <dbReference type="ChEBI" id="CHEBI:30616"/>
    </ligand>
</feature>
<feature type="binding site" evidence="3">
    <location>
        <position position="169"/>
    </location>
    <ligand>
        <name>beta-D-fructose 6-phosphate</name>
        <dbReference type="ChEBI" id="CHEBI:57634"/>
    </ligand>
</feature>
<feature type="binding site" evidence="3">
    <location>
        <position position="173"/>
    </location>
    <ligand>
        <name>beta-D-fructose 6-phosphate</name>
        <dbReference type="ChEBI" id="CHEBI:57634"/>
    </ligand>
</feature>
<feature type="binding site" evidence="3">
    <location>
        <position position="231"/>
    </location>
    <ligand>
        <name>beta-D-fructose 2,6-bisphosphate</name>
        <dbReference type="ChEBI" id="CHEBI:58579"/>
    </ligand>
</feature>
<feature type="binding site" evidence="3">
    <location>
        <position position="238"/>
    </location>
    <ligand>
        <name>beta-D-fructose 2,6-bisphosphate</name>
        <dbReference type="ChEBI" id="CHEBI:58579"/>
    </ligand>
</feature>
<feature type="binding site" evidence="3">
    <location>
        <position position="244"/>
    </location>
    <ligand>
        <name>beta-D-fructose 2,6-bisphosphate</name>
        <dbReference type="ChEBI" id="CHEBI:58579"/>
    </ligand>
</feature>
<feature type="binding site" evidence="3">
    <location>
        <position position="313"/>
    </location>
    <ligand>
        <name>beta-D-fructose 2,6-bisphosphate</name>
        <dbReference type="ChEBI" id="CHEBI:58579"/>
    </ligand>
</feature>
<feature type="binding site" evidence="2">
    <location>
        <begin position="324"/>
        <end position="327"/>
    </location>
    <ligand>
        <name>ATP</name>
        <dbReference type="ChEBI" id="CHEBI:30616"/>
    </ligand>
</feature>
<feature type="binding site" evidence="3">
    <location>
        <position position="327"/>
    </location>
    <ligand>
        <name>beta-D-fructose 2,6-bisphosphate</name>
        <dbReference type="ChEBI" id="CHEBI:58579"/>
    </ligand>
</feature>
<feature type="binding site" evidence="3">
    <location>
        <position position="331"/>
    </location>
    <ligand>
        <name>beta-D-fructose 2,6-bisphosphate</name>
        <dbReference type="ChEBI" id="CHEBI:58579"/>
    </ligand>
</feature>
<feature type="binding site" evidence="3">
    <location>
        <position position="342"/>
    </location>
    <ligand>
        <name>beta-D-fructose 2,6-bisphosphate</name>
        <dbReference type="ChEBI" id="CHEBI:58579"/>
    </ligand>
</feature>
<feature type="binding site" evidence="2">
    <location>
        <begin position="368"/>
        <end position="372"/>
    </location>
    <ligand>
        <name>ATP</name>
        <dbReference type="ChEBI" id="CHEBI:30616"/>
    </ligand>
</feature>
<feature type="binding site" evidence="3">
    <location>
        <position position="368"/>
    </location>
    <ligand>
        <name>beta-D-fructose 2,6-bisphosphate</name>
        <dbReference type="ChEBI" id="CHEBI:58579"/>
    </ligand>
</feature>
<feature type="binding site" evidence="2">
    <location>
        <position position="372"/>
    </location>
    <ligand>
        <name>beta-D-fructose 2,6-bisphosphate</name>
        <dbReference type="ChEBI" id="CHEBI:58579"/>
    </ligand>
</feature>
<feature type="binding site" evidence="3">
    <location>
        <position position="404"/>
    </location>
    <ligand>
        <name>ATP</name>
        <dbReference type="ChEBI" id="CHEBI:30616"/>
    </ligand>
</feature>
<feature type="site" description="Transition state stabilizer" evidence="3">
    <location>
        <position position="231"/>
    </location>
</feature>
<feature type="site" description="Transition state stabilizer" evidence="3">
    <location>
        <position position="238"/>
    </location>
</feature>
<feature type="site" description="Transition state stabilizer" evidence="3">
    <location>
        <position position="367"/>
    </location>
</feature>
<feature type="modified residue" description="Phosphoserine" evidence="14">
    <location>
        <position position="435"/>
    </location>
</feature>
<feature type="modified residue" description="Phosphoserine" evidence="13 14 15">
    <location>
        <position position="446"/>
    </location>
</feature>
<feature type="sequence conflict" description="In Ref. 1; AAB22823." evidence="9" ref="1">
    <original>E</original>
    <variation>Q</variation>
    <location>
        <position position="199"/>
    </location>
</feature>
<feature type="sequence conflict" description="In Ref. 1; AAB22823." evidence="9" ref="1">
    <original>V</original>
    <variation>E</variation>
    <location>
        <position position="362"/>
    </location>
</feature>
<feature type="sequence conflict" description="In Ref. 1; AAB22823." evidence="9" ref="1">
    <original>LE</original>
    <variation>FQ</variation>
    <location>
        <begin position="448"/>
        <end position="449"/>
    </location>
</feature>
<accession>P32604</accession>
<accession>D6VW32</accession>
<evidence type="ECO:0000250" key="1"/>
<evidence type="ECO:0000250" key="2">
    <source>
        <dbReference type="UniProtKB" id="P07953"/>
    </source>
</evidence>
<evidence type="ECO:0000250" key="3">
    <source>
        <dbReference type="UniProtKB" id="Q16875"/>
    </source>
</evidence>
<evidence type="ECO:0000255" key="4"/>
<evidence type="ECO:0000269" key="5">
    <source>
    </source>
</evidence>
<evidence type="ECO:0000269" key="6">
    <source>
    </source>
</evidence>
<evidence type="ECO:0000303" key="7">
    <source>
    </source>
</evidence>
<evidence type="ECO:0000303" key="8">
    <source>
    </source>
</evidence>
<evidence type="ECO:0000305" key="9"/>
<evidence type="ECO:0000305" key="10">
    <source>
    </source>
</evidence>
<evidence type="ECO:0000305" key="11">
    <source>
    </source>
</evidence>
<evidence type="ECO:0000305" key="12">
    <source>
    </source>
</evidence>
<evidence type="ECO:0007744" key="13">
    <source>
    </source>
</evidence>
<evidence type="ECO:0007744" key="14">
    <source>
    </source>
</evidence>
<evidence type="ECO:0007744" key="15">
    <source>
    </source>
</evidence>
<keyword id="KW-0067">ATP-binding</keyword>
<keyword id="KW-0378">Hydrolase</keyword>
<keyword id="KW-0547">Nucleotide-binding</keyword>
<keyword id="KW-0597">Phosphoprotein</keyword>
<keyword id="KW-1185">Reference proteome</keyword>
<name>F26_YEAST</name>